<evidence type="ECO:0000250" key="1"/>
<evidence type="ECO:0000255" key="2"/>
<evidence type="ECO:0000269" key="3">
    <source>
    </source>
</evidence>
<evidence type="ECO:0000303" key="4">
    <source>
    </source>
</evidence>
<evidence type="ECO:0000305" key="5"/>
<evidence type="ECO:0000312" key="6">
    <source>
        <dbReference type="Araport" id="AT4G24715"/>
    </source>
</evidence>
<evidence type="ECO:0000312" key="7">
    <source>
        <dbReference type="EMBL" id="CAA22991.1"/>
    </source>
</evidence>
<gene>
    <name evidence="4" type="primary">NRT3.2</name>
    <name evidence="6" type="ordered locus">At4g24715</name>
    <name evidence="7" type="ORF">F22K18.80</name>
</gene>
<sequence>MAIHTLLFVSLLIFSLIESSSGGKKDRLFTDLQNSIEVTAKPVKDSGVLEAGKDMVTITWKLKSSSAKVDTDTAFKTIQVKLCYAPISQVDRPWRKTDNKLFKDRSCPHEIVSKAYDKTPQSLDWTIGLDIPTGTYFVRAYGIDGDGHEVAYGQSTDEGRTTNLFSVHAISGHHVGLDIASTFFSVFSVVSLFVFFVMEKRKAKLEQRE</sequence>
<organism>
    <name type="scientific">Arabidopsis thaliana</name>
    <name type="common">Mouse-ear cress</name>
    <dbReference type="NCBI Taxonomy" id="3702"/>
    <lineage>
        <taxon>Eukaryota</taxon>
        <taxon>Viridiplantae</taxon>
        <taxon>Streptophyta</taxon>
        <taxon>Embryophyta</taxon>
        <taxon>Tracheophyta</taxon>
        <taxon>Spermatophyta</taxon>
        <taxon>Magnoliopsida</taxon>
        <taxon>eudicotyledons</taxon>
        <taxon>Gunneridae</taxon>
        <taxon>Pentapetalae</taxon>
        <taxon>rosids</taxon>
        <taxon>malvids</taxon>
        <taxon>Brassicales</taxon>
        <taxon>Brassicaceae</taxon>
        <taxon>Camelineae</taxon>
        <taxon>Arabidopsis</taxon>
    </lineage>
</organism>
<name>NRT32_ARATH</name>
<comment type="function">
    <text evidence="1 3">Acts as a dual component transporter with NTR2.1. Required for high-affinity nitrate transport (By similarity).</text>
</comment>
<comment type="subcellular location">
    <subcellularLocation>
        <location evidence="5">Cell membrane</location>
        <topology evidence="5">Single-pass membrane protein</topology>
    </subcellularLocation>
</comment>
<comment type="tissue specificity">
    <text evidence="3">Bearly detected in roots and shoots.</text>
</comment>
<comment type="induction">
    <text evidence="3">Not regulated by nitrate.</text>
</comment>
<comment type="similarity">
    <text evidence="5">Belongs to the NAR2 family.</text>
</comment>
<comment type="sequence caution" evidence="5">
    <conflict type="erroneous initiation">
        <sequence resource="EMBL-CDS" id="ABF59166"/>
    </conflict>
    <text>Extended N-terminus.</text>
</comment>
<comment type="sequence caution" evidence="5">
    <conflict type="erroneous initiation">
        <sequence resource="EMBL-CDS" id="ANM66321"/>
    </conflict>
    <text>Extended N-terminus.</text>
</comment>
<proteinExistence type="evidence at transcript level"/>
<feature type="signal peptide" evidence="2">
    <location>
        <begin position="1"/>
        <end position="22"/>
    </location>
</feature>
<feature type="chain" id="PRO_0000400106" description="High-affinity nitrate transporter 3.2">
    <location>
        <begin position="23"/>
        <end position="209"/>
    </location>
</feature>
<feature type="transmembrane region" description="Helical" evidence="2">
    <location>
        <begin position="177"/>
        <end position="197"/>
    </location>
</feature>
<dbReference type="EMBL" id="AL035356">
    <property type="protein sequence ID" value="CAA22991.1"/>
    <property type="molecule type" value="Genomic_DNA"/>
</dbReference>
<dbReference type="EMBL" id="AL161562">
    <property type="protein sequence ID" value="CAB79382.1"/>
    <property type="molecule type" value="Genomic_DNA"/>
</dbReference>
<dbReference type="EMBL" id="CP002687">
    <property type="protein sequence ID" value="ANM66321.1"/>
    <property type="status" value="ALT_INIT"/>
    <property type="molecule type" value="Genomic_DNA"/>
</dbReference>
<dbReference type="EMBL" id="DQ492237">
    <property type="protein sequence ID" value="ABF59166.1"/>
    <property type="status" value="ALT_INIT"/>
    <property type="molecule type" value="mRNA"/>
</dbReference>
<dbReference type="PIR" id="T05562">
    <property type="entry name" value="T05562"/>
</dbReference>
<dbReference type="RefSeq" id="NP_001190826.1">
    <property type="nucleotide sequence ID" value="NM_001203897.1"/>
</dbReference>
<dbReference type="BioGRID" id="13864">
    <property type="interactions" value="1"/>
</dbReference>
<dbReference type="STRING" id="3702.Q9SB67"/>
<dbReference type="ProteomicsDB" id="249051"/>
<dbReference type="DNASU" id="828575"/>
<dbReference type="GeneID" id="28720181"/>
<dbReference type="KEGG" id="ath:AT4G24715"/>
<dbReference type="Araport" id="AT4G24715"/>
<dbReference type="TAIR" id="AT4G24715"/>
<dbReference type="InParanoid" id="Q9SB67"/>
<dbReference type="PRO" id="PR:Q9SB67"/>
<dbReference type="Proteomes" id="UP000006548">
    <property type="component" value="Chromosome 4"/>
</dbReference>
<dbReference type="ExpressionAtlas" id="Q9SB67">
    <property type="expression patterns" value="baseline and differential"/>
</dbReference>
<dbReference type="GO" id="GO:0005886">
    <property type="term" value="C:plasma membrane"/>
    <property type="evidence" value="ECO:0007669"/>
    <property type="project" value="UniProtKB-SubCell"/>
</dbReference>
<dbReference type="GO" id="GO:0015112">
    <property type="term" value="F:nitrate transmembrane transporter activity"/>
    <property type="evidence" value="ECO:0000318"/>
    <property type="project" value="GO_Central"/>
</dbReference>
<dbReference type="GO" id="GO:0042128">
    <property type="term" value="P:nitrate assimilation"/>
    <property type="evidence" value="ECO:0007669"/>
    <property type="project" value="UniProtKB-KW"/>
</dbReference>
<dbReference type="GO" id="GO:0010167">
    <property type="term" value="P:response to nitrate"/>
    <property type="evidence" value="ECO:0000318"/>
    <property type="project" value="GO_Central"/>
</dbReference>
<dbReference type="InterPro" id="IPR016605">
    <property type="entry name" value="Transptr_NO3_Nar2"/>
</dbReference>
<dbReference type="PANTHER" id="PTHR34806">
    <property type="entry name" value="HIGH-AFFINITY NITRATE TRANSPORTER 3.2"/>
    <property type="match status" value="1"/>
</dbReference>
<dbReference type="PANTHER" id="PTHR34806:SF13">
    <property type="entry name" value="HIGH-AFFINITY NITRATE TRANSPORTER 3.2"/>
    <property type="match status" value="1"/>
</dbReference>
<dbReference type="Pfam" id="PF16974">
    <property type="entry name" value="NAR2"/>
    <property type="match status" value="1"/>
</dbReference>
<dbReference type="PIRSF" id="PIRSF012939">
    <property type="entry name" value="Transpt_NO3_Nar2"/>
    <property type="match status" value="1"/>
</dbReference>
<reference key="1">
    <citation type="journal article" date="1999" name="Nature">
        <title>Sequence and analysis of chromosome 4 of the plant Arabidopsis thaliana.</title>
        <authorList>
            <person name="Mayer K.F.X."/>
            <person name="Schueller C."/>
            <person name="Wambutt R."/>
            <person name="Murphy G."/>
            <person name="Volckaert G."/>
            <person name="Pohl T."/>
            <person name="Duesterhoeft A."/>
            <person name="Stiekema W."/>
            <person name="Entian K.-D."/>
            <person name="Terryn N."/>
            <person name="Harris B."/>
            <person name="Ansorge W."/>
            <person name="Brandt P."/>
            <person name="Grivell L.A."/>
            <person name="Rieger M."/>
            <person name="Weichselgartner M."/>
            <person name="de Simone V."/>
            <person name="Obermaier B."/>
            <person name="Mache R."/>
            <person name="Mueller M."/>
            <person name="Kreis M."/>
            <person name="Delseny M."/>
            <person name="Puigdomenech P."/>
            <person name="Watson M."/>
            <person name="Schmidtheini T."/>
            <person name="Reichert B."/>
            <person name="Portetelle D."/>
            <person name="Perez-Alonso M."/>
            <person name="Boutry M."/>
            <person name="Bancroft I."/>
            <person name="Vos P."/>
            <person name="Hoheisel J."/>
            <person name="Zimmermann W."/>
            <person name="Wedler H."/>
            <person name="Ridley P."/>
            <person name="Langham S.-A."/>
            <person name="McCullagh B."/>
            <person name="Bilham L."/>
            <person name="Robben J."/>
            <person name="van der Schueren J."/>
            <person name="Grymonprez B."/>
            <person name="Chuang Y.-J."/>
            <person name="Vandenbussche F."/>
            <person name="Braeken M."/>
            <person name="Weltjens I."/>
            <person name="Voet M."/>
            <person name="Bastiaens I."/>
            <person name="Aert R."/>
            <person name="Defoor E."/>
            <person name="Weitzenegger T."/>
            <person name="Bothe G."/>
            <person name="Ramsperger U."/>
            <person name="Hilbert H."/>
            <person name="Braun M."/>
            <person name="Holzer E."/>
            <person name="Brandt A."/>
            <person name="Peters S."/>
            <person name="van Staveren M."/>
            <person name="Dirkse W."/>
            <person name="Mooijman P."/>
            <person name="Klein Lankhorst R."/>
            <person name="Rose M."/>
            <person name="Hauf J."/>
            <person name="Koetter P."/>
            <person name="Berneiser S."/>
            <person name="Hempel S."/>
            <person name="Feldpausch M."/>
            <person name="Lamberth S."/>
            <person name="Van den Daele H."/>
            <person name="De Keyser A."/>
            <person name="Buysshaert C."/>
            <person name="Gielen J."/>
            <person name="Villarroel R."/>
            <person name="De Clercq R."/>
            <person name="van Montagu M."/>
            <person name="Rogers J."/>
            <person name="Cronin A."/>
            <person name="Quail M.A."/>
            <person name="Bray-Allen S."/>
            <person name="Clark L."/>
            <person name="Doggett J."/>
            <person name="Hall S."/>
            <person name="Kay M."/>
            <person name="Lennard N."/>
            <person name="McLay K."/>
            <person name="Mayes R."/>
            <person name="Pettett A."/>
            <person name="Rajandream M.A."/>
            <person name="Lyne M."/>
            <person name="Benes V."/>
            <person name="Rechmann S."/>
            <person name="Borkova D."/>
            <person name="Bloecker H."/>
            <person name="Scharfe M."/>
            <person name="Grimm M."/>
            <person name="Loehnert T.-H."/>
            <person name="Dose S."/>
            <person name="de Haan M."/>
            <person name="Maarse A.C."/>
            <person name="Schaefer M."/>
            <person name="Mueller-Auer S."/>
            <person name="Gabel C."/>
            <person name="Fuchs M."/>
            <person name="Fartmann B."/>
            <person name="Granderath K."/>
            <person name="Dauner D."/>
            <person name="Herzl A."/>
            <person name="Neumann S."/>
            <person name="Argiriou A."/>
            <person name="Vitale D."/>
            <person name="Liguori R."/>
            <person name="Piravandi E."/>
            <person name="Massenet O."/>
            <person name="Quigley F."/>
            <person name="Clabauld G."/>
            <person name="Muendlein A."/>
            <person name="Felber R."/>
            <person name="Schnabl S."/>
            <person name="Hiller R."/>
            <person name="Schmidt W."/>
            <person name="Lecharny A."/>
            <person name="Aubourg S."/>
            <person name="Chefdor F."/>
            <person name="Cooke R."/>
            <person name="Berger C."/>
            <person name="Monfort A."/>
            <person name="Casacuberta E."/>
            <person name="Gibbons T."/>
            <person name="Weber N."/>
            <person name="Vandenbol M."/>
            <person name="Bargues M."/>
            <person name="Terol J."/>
            <person name="Torres A."/>
            <person name="Perez-Perez A."/>
            <person name="Purnelle B."/>
            <person name="Bent E."/>
            <person name="Johnson S."/>
            <person name="Tacon D."/>
            <person name="Jesse T."/>
            <person name="Heijnen L."/>
            <person name="Schwarz S."/>
            <person name="Scholler P."/>
            <person name="Heber S."/>
            <person name="Francs P."/>
            <person name="Bielke C."/>
            <person name="Frishman D."/>
            <person name="Haase D."/>
            <person name="Lemcke K."/>
            <person name="Mewes H.-W."/>
            <person name="Stocker S."/>
            <person name="Zaccaria P."/>
            <person name="Bevan M."/>
            <person name="Wilson R.K."/>
            <person name="de la Bastide M."/>
            <person name="Habermann K."/>
            <person name="Parnell L."/>
            <person name="Dedhia N."/>
            <person name="Gnoj L."/>
            <person name="Schutz K."/>
            <person name="Huang E."/>
            <person name="Spiegel L."/>
            <person name="Sekhon M."/>
            <person name="Murray J."/>
            <person name="Sheet P."/>
            <person name="Cordes M."/>
            <person name="Abu-Threideh J."/>
            <person name="Stoneking T."/>
            <person name="Kalicki J."/>
            <person name="Graves T."/>
            <person name="Harmon G."/>
            <person name="Edwards J."/>
            <person name="Latreille P."/>
            <person name="Courtney L."/>
            <person name="Cloud J."/>
            <person name="Abbott A."/>
            <person name="Scott K."/>
            <person name="Johnson D."/>
            <person name="Minx P."/>
            <person name="Bentley D."/>
            <person name="Fulton B."/>
            <person name="Miller N."/>
            <person name="Greco T."/>
            <person name="Kemp K."/>
            <person name="Kramer J."/>
            <person name="Fulton L."/>
            <person name="Mardis E."/>
            <person name="Dante M."/>
            <person name="Pepin K."/>
            <person name="Hillier L.W."/>
            <person name="Nelson J."/>
            <person name="Spieth J."/>
            <person name="Ryan E."/>
            <person name="Andrews S."/>
            <person name="Geisel C."/>
            <person name="Layman D."/>
            <person name="Du H."/>
            <person name="Ali J."/>
            <person name="Berghoff A."/>
            <person name="Jones K."/>
            <person name="Drone K."/>
            <person name="Cotton M."/>
            <person name="Joshu C."/>
            <person name="Antonoiu B."/>
            <person name="Zidanic M."/>
            <person name="Strong C."/>
            <person name="Sun H."/>
            <person name="Lamar B."/>
            <person name="Yordan C."/>
            <person name="Ma P."/>
            <person name="Zhong J."/>
            <person name="Preston R."/>
            <person name="Vil D."/>
            <person name="Shekher M."/>
            <person name="Matero A."/>
            <person name="Shah R."/>
            <person name="Swaby I.K."/>
            <person name="O'Shaughnessy A."/>
            <person name="Rodriguez M."/>
            <person name="Hoffman J."/>
            <person name="Till S."/>
            <person name="Granat S."/>
            <person name="Shohdy N."/>
            <person name="Hasegawa A."/>
            <person name="Hameed A."/>
            <person name="Lodhi M."/>
            <person name="Johnson A."/>
            <person name="Chen E."/>
            <person name="Marra M.A."/>
            <person name="Martienssen R."/>
            <person name="McCombie W.R."/>
        </authorList>
    </citation>
    <scope>NUCLEOTIDE SEQUENCE [LARGE SCALE GENOMIC DNA]</scope>
    <source>
        <strain>cv. Columbia</strain>
    </source>
</reference>
<reference key="2">
    <citation type="journal article" date="2017" name="Plant J.">
        <title>Araport11: a complete reannotation of the Arabidopsis thaliana reference genome.</title>
        <authorList>
            <person name="Cheng C.Y."/>
            <person name="Krishnakumar V."/>
            <person name="Chan A.P."/>
            <person name="Thibaud-Nissen F."/>
            <person name="Schobel S."/>
            <person name="Town C.D."/>
        </authorList>
    </citation>
    <scope>GENOME REANNOTATION</scope>
    <source>
        <strain>cv. Columbia</strain>
    </source>
</reference>
<reference key="3">
    <citation type="journal article" date="2006" name="Plant Biotechnol. J.">
        <title>Simultaneous high-throughput recombinational cloning of open reading frames in closed and open configurations.</title>
        <authorList>
            <person name="Underwood B.A."/>
            <person name="Vanderhaeghen R."/>
            <person name="Whitford R."/>
            <person name="Town C.D."/>
            <person name="Hilson P."/>
        </authorList>
    </citation>
    <scope>NUCLEOTIDE SEQUENCE [LARGE SCALE MRNA]</scope>
    <source>
        <strain>cv. Columbia</strain>
    </source>
</reference>
<reference key="4">
    <citation type="journal article" date="2006" name="Plant Physiol.">
        <title>High-affinity nitrate transport in roots of Arabidopsis depends on expression of the NAR2-like gene AtNRT3.1.</title>
        <authorList>
            <person name="Okamoto M."/>
            <person name="Kumar A."/>
            <person name="Li W."/>
            <person name="Wang Y."/>
            <person name="Siddiqi M.Y."/>
            <person name="Crawford N.M."/>
            <person name="Glass A.D."/>
        </authorList>
    </citation>
    <scope>FUNCTION</scope>
    <scope>TISSUE SPECIFICITY</scope>
    <scope>INDUCTION BY NITRATE</scope>
</reference>
<accession>Q9SB67</accession>
<accession>A0A1P8B438</accession>
<accession>B3H755</accession>
<accession>F4JR12</accession>
<accession>Q1G2Z1</accession>
<protein>
    <recommendedName>
        <fullName evidence="4">High-affinity nitrate transporter 3.2</fullName>
    </recommendedName>
</protein>
<keyword id="KW-1003">Cell membrane</keyword>
<keyword id="KW-0472">Membrane</keyword>
<keyword id="KW-0534">Nitrate assimilation</keyword>
<keyword id="KW-1185">Reference proteome</keyword>
<keyword id="KW-0732">Signal</keyword>
<keyword id="KW-0812">Transmembrane</keyword>
<keyword id="KW-1133">Transmembrane helix</keyword>